<protein>
    <recommendedName>
        <fullName>Conotoxin Gla(3)-TxVI</fullName>
    </recommendedName>
    <alternativeName>
        <fullName>Conotoxin Glu7/Gla(3)-TxVI</fullName>
    </alternativeName>
    <alternativeName>
        <fullName>Conotoxin TxMEKL-04111</fullName>
    </alternativeName>
</protein>
<proteinExistence type="evidence at protein level"/>
<comment type="subcellular location">
    <subcellularLocation>
        <location>Secreted</location>
    </subcellularLocation>
</comment>
<comment type="tissue specificity">
    <text>Expressed by the venom duct.</text>
</comment>
<comment type="domain">
    <text evidence="1">The presence of a 'disulfide through disulfide knot' structurally defines this protein as a knottin.</text>
</comment>
<comment type="domain">
    <text>The cysteine framework is VI/VII (C-C-CC-C-C).</text>
</comment>
<comment type="mass spectrometry" mass="3180.6" method="MALDI" evidence="3">
    <text>free 53-Glu.</text>
</comment>
<comment type="mass spectrometry" mass="3225.0" method="MALDI" evidence="3">
    <text>53-carboxyglutamate.</text>
</comment>
<comment type="similarity">
    <text evidence="4">Belongs to the conotoxin O2 superfamily.</text>
</comment>
<reference key="1">
    <citation type="journal article" date="2001" name="Mol. Biol. Evol.">
        <title>Mechanisms for evolving hypervariability: the case of conopeptides.</title>
        <authorList>
            <person name="Conticello S.G."/>
            <person name="Gilad Y."/>
            <person name="Avidan N."/>
            <person name="Ben-Asher E."/>
            <person name="Levy Z."/>
            <person name="Fainzilber M."/>
        </authorList>
    </citation>
    <scope>NUCLEOTIDE SEQUENCE [MRNA]</scope>
    <source>
        <tissue>Venom duct</tissue>
    </source>
</reference>
<reference key="2">
    <citation type="journal article" date="2006" name="FEBS J.">
        <title>Novel gamma-carboxyglutamic acid-containing peptides from the venom of Conus textile.</title>
        <authorList>
            <person name="Czerwiec E."/>
            <person name="Kalume D.E."/>
            <person name="Roepstorff P."/>
            <person name="Hambe B."/>
            <person name="Furie B."/>
            <person name="Furie B.C."/>
            <person name="Stenflo J."/>
        </authorList>
    </citation>
    <scope>NUCLEOTIDE SEQUENCE [MRNA]</scope>
    <scope>PROTEIN SEQUENCE OF 47-73</scope>
    <scope>MASS SPECTROMETRY</scope>
    <scope>HYDROXYLATION AT PRO-49 AND PRO-54</scope>
    <scope>GAMMA-CARBOXYGLUTAMATION AT GLU-53 AND GLU-60</scope>
    <scope>BROMINATION AT TRP-64</scope>
    <source>
        <tissue>Venom</tissue>
        <tissue>Venom gland</tissue>
    </source>
</reference>
<sequence length="73" mass="8363">MQKLIILLLVAAVLMSAQAVLQEKRPKEKIKFLSKRKTDAEKQQKRLCPDYTEPCSHAHECCSWNCYNGHCTG</sequence>
<evidence type="ECO:0000250" key="1"/>
<evidence type="ECO:0000255" key="2"/>
<evidence type="ECO:0000269" key="3">
    <source>
    </source>
</evidence>
<evidence type="ECO:0000305" key="4"/>
<organism>
    <name type="scientific">Conus textile</name>
    <name type="common">Cloth-of-gold cone</name>
    <dbReference type="NCBI Taxonomy" id="6494"/>
    <lineage>
        <taxon>Eukaryota</taxon>
        <taxon>Metazoa</taxon>
        <taxon>Spiralia</taxon>
        <taxon>Lophotrochozoa</taxon>
        <taxon>Mollusca</taxon>
        <taxon>Gastropoda</taxon>
        <taxon>Caenogastropoda</taxon>
        <taxon>Neogastropoda</taxon>
        <taxon>Conoidea</taxon>
        <taxon>Conidae</taxon>
        <taxon>Conus</taxon>
        <taxon>Cylinder</taxon>
    </lineage>
</organism>
<accession>Q9BPB4</accession>
<keyword id="KW-0102">Bromination</keyword>
<keyword id="KW-0165">Cleavage on pair of basic residues</keyword>
<keyword id="KW-0903">Direct protein sequencing</keyword>
<keyword id="KW-1015">Disulfide bond</keyword>
<keyword id="KW-0301">Gamma-carboxyglutamic acid</keyword>
<keyword id="KW-0379">Hydroxylation</keyword>
<keyword id="KW-0960">Knottin</keyword>
<keyword id="KW-0528">Neurotoxin</keyword>
<keyword id="KW-0964">Secreted</keyword>
<keyword id="KW-0732">Signal</keyword>
<keyword id="KW-0800">Toxin</keyword>
<dbReference type="EMBL" id="AF215021">
    <property type="protein sequence ID" value="AAG60449.1"/>
    <property type="molecule type" value="mRNA"/>
</dbReference>
<dbReference type="SMR" id="Q9BPB4"/>
<dbReference type="ConoServer" id="708">
    <property type="toxin name" value="Gla(3)-TxVI precursor"/>
</dbReference>
<dbReference type="GO" id="GO:0005576">
    <property type="term" value="C:extracellular region"/>
    <property type="evidence" value="ECO:0007669"/>
    <property type="project" value="UniProtKB-SubCell"/>
</dbReference>
<dbReference type="GO" id="GO:0008200">
    <property type="term" value="F:ion channel inhibitor activity"/>
    <property type="evidence" value="ECO:0007669"/>
    <property type="project" value="InterPro"/>
</dbReference>
<dbReference type="GO" id="GO:0090729">
    <property type="term" value="F:toxin activity"/>
    <property type="evidence" value="ECO:0007669"/>
    <property type="project" value="UniProtKB-KW"/>
</dbReference>
<dbReference type="InterPro" id="IPR004214">
    <property type="entry name" value="Conotoxin"/>
</dbReference>
<dbReference type="Pfam" id="PF02950">
    <property type="entry name" value="Conotoxin"/>
    <property type="match status" value="1"/>
</dbReference>
<feature type="signal peptide" evidence="2">
    <location>
        <begin position="1"/>
        <end position="19"/>
    </location>
</feature>
<feature type="propeptide" id="PRO_0000404794">
    <location>
        <begin position="20"/>
        <end position="44"/>
    </location>
</feature>
<feature type="peptide" id="PRO_0000404795" description="Conotoxin Gla(3)-TxVI">
    <location>
        <begin position="47"/>
        <end position="73"/>
    </location>
</feature>
<feature type="modified residue" description="4-hydroxyproline" evidence="3">
    <location>
        <position position="49"/>
    </location>
</feature>
<feature type="modified residue" description="4-carboxyglutamate; partial" evidence="3">
    <location>
        <position position="53"/>
    </location>
</feature>
<feature type="modified residue" description="4-hydroxyproline" evidence="3">
    <location>
        <position position="54"/>
    </location>
</feature>
<feature type="modified residue" description="4-carboxyglutamate" evidence="3">
    <location>
        <position position="60"/>
    </location>
</feature>
<feature type="modified residue" description="6'-bromotryptophan" evidence="3">
    <location>
        <position position="64"/>
    </location>
</feature>
<feature type="disulfide bond" evidence="1">
    <location>
        <begin position="48"/>
        <end position="62"/>
    </location>
</feature>
<feature type="disulfide bond" evidence="1">
    <location>
        <begin position="55"/>
        <end position="66"/>
    </location>
</feature>
<feature type="disulfide bond" evidence="1">
    <location>
        <begin position="61"/>
        <end position="71"/>
    </location>
</feature>
<feature type="sequence conflict" description="In Ref. 2; no nucleotide entry." evidence="4" ref="2">
    <original>A</original>
    <variation>T</variation>
    <location>
        <position position="17"/>
    </location>
</feature>
<feature type="sequence conflict" description="In Ref. 2; no nucleotide entry." evidence="4" ref="2">
    <original>F</original>
    <variation>L</variation>
    <location>
        <position position="32"/>
    </location>
</feature>
<feature type="sequence conflict" description="In Ref. 2; no nucleotide entry." evidence="4" ref="2">
    <original>NG</original>
    <variation>GN</variation>
    <location>
        <begin position="68"/>
        <end position="69"/>
    </location>
</feature>
<name>O236E_CONTE</name>